<reference key="1">
    <citation type="submission" date="2003-03" db="EMBL/GenBank/DDBJ databases">
        <title>The complete genome sequence of Neisseria gonorrhoeae.</title>
        <authorList>
            <person name="Lewis L.A."/>
            <person name="Gillaspy A.F."/>
            <person name="McLaughlin R.E."/>
            <person name="Gipson M."/>
            <person name="Ducey T.F."/>
            <person name="Ownbey T."/>
            <person name="Hartman K."/>
            <person name="Nydick C."/>
            <person name="Carson M.B."/>
            <person name="Vaughn J."/>
            <person name="Thomson C."/>
            <person name="Song L."/>
            <person name="Lin S."/>
            <person name="Yuan X."/>
            <person name="Najar F."/>
            <person name="Zhan M."/>
            <person name="Ren Q."/>
            <person name="Zhu H."/>
            <person name="Qi S."/>
            <person name="Kenton S.M."/>
            <person name="Lai H."/>
            <person name="White J.D."/>
            <person name="Clifton S."/>
            <person name="Roe B.A."/>
            <person name="Dyer D.W."/>
        </authorList>
    </citation>
    <scope>NUCLEOTIDE SEQUENCE [LARGE SCALE GENOMIC DNA]</scope>
    <source>
        <strain>ATCC 700825 / FA 1090</strain>
    </source>
</reference>
<accession>Q5F645</accession>
<keyword id="KW-0028">Amino-acid biosynthesis</keyword>
<keyword id="KW-0057">Aromatic amino acid biosynthesis</keyword>
<keyword id="KW-0210">Decarboxylase</keyword>
<keyword id="KW-0456">Lyase</keyword>
<keyword id="KW-1185">Reference proteome</keyword>
<keyword id="KW-0822">Tryptophan biosynthesis</keyword>
<evidence type="ECO:0000255" key="1">
    <source>
        <dbReference type="HAMAP-Rule" id="MF_00134"/>
    </source>
</evidence>
<gene>
    <name evidence="1" type="primary">trpC</name>
    <name type="ordered locus">NGO_1721</name>
</gene>
<feature type="chain" id="PRO_1000018508" description="Indole-3-glycerol phosphate synthase">
    <location>
        <begin position="1"/>
        <end position="260"/>
    </location>
</feature>
<proteinExistence type="inferred from homology"/>
<sequence length="260" mass="28622">MTDILNKILATKAQEVAAQKAAVNAEHIRALAAEAAPVRSFIDSIRGKHRLNLPAVIAEIKKASPSKGLIRPDFRPAEIARAYENAGAACLSVLTDEPYFQGSPEYLKQAREAVLLPVLRKDFIIDEYQVYQARAWGADAVLLIAAALEQGQLERFEALAHELGMTVLLELHDETELEKCRNLTTPLWGVNNRNLRTFEVSLDQTLSLLPALEGKTVVTESGITGKADVEFMRARGVHTFLIGETFMRADDIGAEVGKLF</sequence>
<dbReference type="EC" id="4.1.1.48" evidence="1"/>
<dbReference type="EMBL" id="AE004969">
    <property type="protein sequence ID" value="AAW90342.1"/>
    <property type="molecule type" value="Genomic_DNA"/>
</dbReference>
<dbReference type="RefSeq" id="WP_003694229.1">
    <property type="nucleotide sequence ID" value="NC_002946.2"/>
</dbReference>
<dbReference type="RefSeq" id="YP_208754.1">
    <property type="nucleotide sequence ID" value="NC_002946.2"/>
</dbReference>
<dbReference type="SMR" id="Q5F645"/>
<dbReference type="STRING" id="242231.NGO_1721"/>
<dbReference type="KEGG" id="ngo:NGO_1721"/>
<dbReference type="PATRIC" id="fig|242231.10.peg.2057"/>
<dbReference type="HOGENOM" id="CLU_034247_2_0_4"/>
<dbReference type="UniPathway" id="UPA00035">
    <property type="reaction ID" value="UER00043"/>
</dbReference>
<dbReference type="Proteomes" id="UP000000535">
    <property type="component" value="Chromosome"/>
</dbReference>
<dbReference type="GO" id="GO:0004425">
    <property type="term" value="F:indole-3-glycerol-phosphate synthase activity"/>
    <property type="evidence" value="ECO:0007669"/>
    <property type="project" value="UniProtKB-UniRule"/>
</dbReference>
<dbReference type="GO" id="GO:0004640">
    <property type="term" value="F:phosphoribosylanthranilate isomerase activity"/>
    <property type="evidence" value="ECO:0007669"/>
    <property type="project" value="TreeGrafter"/>
</dbReference>
<dbReference type="GO" id="GO:0000162">
    <property type="term" value="P:L-tryptophan biosynthetic process"/>
    <property type="evidence" value="ECO:0007669"/>
    <property type="project" value="UniProtKB-UniRule"/>
</dbReference>
<dbReference type="CDD" id="cd00331">
    <property type="entry name" value="IGPS"/>
    <property type="match status" value="1"/>
</dbReference>
<dbReference type="FunFam" id="3.20.20.70:FF:000024">
    <property type="entry name" value="Indole-3-glycerol phosphate synthase"/>
    <property type="match status" value="1"/>
</dbReference>
<dbReference type="Gene3D" id="3.20.20.70">
    <property type="entry name" value="Aldolase class I"/>
    <property type="match status" value="1"/>
</dbReference>
<dbReference type="HAMAP" id="MF_00134_B">
    <property type="entry name" value="IGPS_B"/>
    <property type="match status" value="1"/>
</dbReference>
<dbReference type="InterPro" id="IPR013785">
    <property type="entry name" value="Aldolase_TIM"/>
</dbReference>
<dbReference type="InterPro" id="IPR045186">
    <property type="entry name" value="Indole-3-glycerol_P_synth"/>
</dbReference>
<dbReference type="InterPro" id="IPR013798">
    <property type="entry name" value="Indole-3-glycerol_P_synth_dom"/>
</dbReference>
<dbReference type="InterPro" id="IPR001468">
    <property type="entry name" value="Indole-3-GlycerolPSynthase_CS"/>
</dbReference>
<dbReference type="InterPro" id="IPR011060">
    <property type="entry name" value="RibuloseP-bd_barrel"/>
</dbReference>
<dbReference type="NCBIfam" id="NF001373">
    <property type="entry name" value="PRK00278.1-6"/>
    <property type="match status" value="1"/>
</dbReference>
<dbReference type="NCBIfam" id="NF001377">
    <property type="entry name" value="PRK00278.2-4"/>
    <property type="match status" value="1"/>
</dbReference>
<dbReference type="PANTHER" id="PTHR22854:SF2">
    <property type="entry name" value="INDOLE-3-GLYCEROL-PHOSPHATE SYNTHASE"/>
    <property type="match status" value="1"/>
</dbReference>
<dbReference type="PANTHER" id="PTHR22854">
    <property type="entry name" value="TRYPTOPHAN BIOSYNTHESIS PROTEIN"/>
    <property type="match status" value="1"/>
</dbReference>
<dbReference type="Pfam" id="PF00218">
    <property type="entry name" value="IGPS"/>
    <property type="match status" value="1"/>
</dbReference>
<dbReference type="SUPFAM" id="SSF51366">
    <property type="entry name" value="Ribulose-phoshate binding barrel"/>
    <property type="match status" value="1"/>
</dbReference>
<dbReference type="PROSITE" id="PS00614">
    <property type="entry name" value="IGPS"/>
    <property type="match status" value="1"/>
</dbReference>
<protein>
    <recommendedName>
        <fullName evidence="1">Indole-3-glycerol phosphate synthase</fullName>
        <shortName evidence="1">IGPS</shortName>
        <ecNumber evidence="1">4.1.1.48</ecNumber>
    </recommendedName>
</protein>
<name>TRPC_NEIG1</name>
<organism>
    <name type="scientific">Neisseria gonorrhoeae (strain ATCC 700825 / FA 1090)</name>
    <dbReference type="NCBI Taxonomy" id="242231"/>
    <lineage>
        <taxon>Bacteria</taxon>
        <taxon>Pseudomonadati</taxon>
        <taxon>Pseudomonadota</taxon>
        <taxon>Betaproteobacteria</taxon>
        <taxon>Neisseriales</taxon>
        <taxon>Neisseriaceae</taxon>
        <taxon>Neisseria</taxon>
    </lineage>
</organism>
<comment type="catalytic activity">
    <reaction evidence="1">
        <text>1-(2-carboxyphenylamino)-1-deoxy-D-ribulose 5-phosphate + H(+) = (1S,2R)-1-C-(indol-3-yl)glycerol 3-phosphate + CO2 + H2O</text>
        <dbReference type="Rhea" id="RHEA:23476"/>
        <dbReference type="ChEBI" id="CHEBI:15377"/>
        <dbReference type="ChEBI" id="CHEBI:15378"/>
        <dbReference type="ChEBI" id="CHEBI:16526"/>
        <dbReference type="ChEBI" id="CHEBI:58613"/>
        <dbReference type="ChEBI" id="CHEBI:58866"/>
        <dbReference type="EC" id="4.1.1.48"/>
    </reaction>
</comment>
<comment type="pathway">
    <text evidence="1">Amino-acid biosynthesis; L-tryptophan biosynthesis; L-tryptophan from chorismate: step 4/5.</text>
</comment>
<comment type="similarity">
    <text evidence="1">Belongs to the TrpC family.</text>
</comment>